<protein>
    <recommendedName>
        <fullName evidence="1">Small ribosomal subunit protein bS20</fullName>
    </recommendedName>
    <alternativeName>
        <fullName evidence="3">30S ribosomal protein S20</fullName>
    </alternativeName>
</protein>
<name>RS20_SHIDS</name>
<keyword id="KW-1185">Reference proteome</keyword>
<keyword id="KW-0687">Ribonucleoprotein</keyword>
<keyword id="KW-0689">Ribosomal protein</keyword>
<keyword id="KW-0694">RNA-binding</keyword>
<keyword id="KW-0699">rRNA-binding</keyword>
<feature type="chain" id="PRO_0000224988" description="Small ribosomal subunit protein bS20">
    <location>
        <begin position="1"/>
        <end position="87"/>
    </location>
</feature>
<feature type="region of interest" description="Disordered" evidence="2">
    <location>
        <begin position="1"/>
        <end position="26"/>
    </location>
</feature>
<sequence length="87" mass="9684">MANIKSAKKRAIQSEKARKHNASRRSMMRTFIKKVYAAIEAGDKAAAQKAFNEMQPIVDRQAAKGLIHKNKAARHKANLTAQINKLA</sequence>
<organism>
    <name type="scientific">Shigella dysenteriae serotype 1 (strain Sd197)</name>
    <dbReference type="NCBI Taxonomy" id="300267"/>
    <lineage>
        <taxon>Bacteria</taxon>
        <taxon>Pseudomonadati</taxon>
        <taxon>Pseudomonadota</taxon>
        <taxon>Gammaproteobacteria</taxon>
        <taxon>Enterobacterales</taxon>
        <taxon>Enterobacteriaceae</taxon>
        <taxon>Shigella</taxon>
    </lineage>
</organism>
<evidence type="ECO:0000255" key="1">
    <source>
        <dbReference type="HAMAP-Rule" id="MF_00500"/>
    </source>
</evidence>
<evidence type="ECO:0000256" key="2">
    <source>
        <dbReference type="SAM" id="MobiDB-lite"/>
    </source>
</evidence>
<evidence type="ECO:0000305" key="3"/>
<gene>
    <name evidence="1" type="primary">rpsT</name>
    <name type="ordered locus">SDY_0045</name>
</gene>
<accession>Q32K74</accession>
<proteinExistence type="inferred from homology"/>
<reference key="1">
    <citation type="journal article" date="2005" name="Nucleic Acids Res.">
        <title>Genome dynamics and diversity of Shigella species, the etiologic agents of bacillary dysentery.</title>
        <authorList>
            <person name="Yang F."/>
            <person name="Yang J."/>
            <person name="Zhang X."/>
            <person name="Chen L."/>
            <person name="Jiang Y."/>
            <person name="Yan Y."/>
            <person name="Tang X."/>
            <person name="Wang J."/>
            <person name="Xiong Z."/>
            <person name="Dong J."/>
            <person name="Xue Y."/>
            <person name="Zhu Y."/>
            <person name="Xu X."/>
            <person name="Sun L."/>
            <person name="Chen S."/>
            <person name="Nie H."/>
            <person name="Peng J."/>
            <person name="Xu J."/>
            <person name="Wang Y."/>
            <person name="Yuan Z."/>
            <person name="Wen Y."/>
            <person name="Yao Z."/>
            <person name="Shen Y."/>
            <person name="Qiang B."/>
            <person name="Hou Y."/>
            <person name="Yu J."/>
            <person name="Jin Q."/>
        </authorList>
    </citation>
    <scope>NUCLEOTIDE SEQUENCE [LARGE SCALE GENOMIC DNA]</scope>
    <source>
        <strain>Sd197</strain>
    </source>
</reference>
<comment type="function">
    <text evidence="1">Binds directly to 16S ribosomal RNA.</text>
</comment>
<comment type="similarity">
    <text evidence="1">Belongs to the bacterial ribosomal protein bS20 family.</text>
</comment>
<dbReference type="EMBL" id="CP000034">
    <property type="protein sequence ID" value="ABB60283.1"/>
    <property type="molecule type" value="Genomic_DNA"/>
</dbReference>
<dbReference type="RefSeq" id="WP_001274021.1">
    <property type="nucleotide sequence ID" value="NC_007606.1"/>
</dbReference>
<dbReference type="RefSeq" id="YP_401772.1">
    <property type="nucleotide sequence ID" value="NC_007606.1"/>
</dbReference>
<dbReference type="SMR" id="Q32K74"/>
<dbReference type="STRING" id="300267.SDY_0045"/>
<dbReference type="EnsemblBacteria" id="ABB60283">
    <property type="protein sequence ID" value="ABB60283"/>
    <property type="gene ID" value="SDY_0045"/>
</dbReference>
<dbReference type="GeneID" id="93777413"/>
<dbReference type="KEGG" id="sdy:SDY_0045"/>
<dbReference type="PATRIC" id="fig|300267.13.peg.49"/>
<dbReference type="HOGENOM" id="CLU_160655_4_0_6"/>
<dbReference type="Proteomes" id="UP000002716">
    <property type="component" value="Chromosome"/>
</dbReference>
<dbReference type="GO" id="GO:0005829">
    <property type="term" value="C:cytosol"/>
    <property type="evidence" value="ECO:0007669"/>
    <property type="project" value="TreeGrafter"/>
</dbReference>
<dbReference type="GO" id="GO:0015935">
    <property type="term" value="C:small ribosomal subunit"/>
    <property type="evidence" value="ECO:0007669"/>
    <property type="project" value="TreeGrafter"/>
</dbReference>
<dbReference type="GO" id="GO:0070181">
    <property type="term" value="F:small ribosomal subunit rRNA binding"/>
    <property type="evidence" value="ECO:0007669"/>
    <property type="project" value="TreeGrafter"/>
</dbReference>
<dbReference type="GO" id="GO:0003735">
    <property type="term" value="F:structural constituent of ribosome"/>
    <property type="evidence" value="ECO:0007669"/>
    <property type="project" value="InterPro"/>
</dbReference>
<dbReference type="GO" id="GO:0006412">
    <property type="term" value="P:translation"/>
    <property type="evidence" value="ECO:0007669"/>
    <property type="project" value="UniProtKB-UniRule"/>
</dbReference>
<dbReference type="FunFam" id="1.20.58.110:FF:000001">
    <property type="entry name" value="30S ribosomal protein S20"/>
    <property type="match status" value="1"/>
</dbReference>
<dbReference type="Gene3D" id="1.20.58.110">
    <property type="entry name" value="Ribosomal protein S20"/>
    <property type="match status" value="1"/>
</dbReference>
<dbReference type="HAMAP" id="MF_00500">
    <property type="entry name" value="Ribosomal_bS20"/>
    <property type="match status" value="1"/>
</dbReference>
<dbReference type="InterPro" id="IPR002583">
    <property type="entry name" value="Ribosomal_bS20"/>
</dbReference>
<dbReference type="InterPro" id="IPR036510">
    <property type="entry name" value="Ribosomal_bS20_sf"/>
</dbReference>
<dbReference type="NCBIfam" id="TIGR00029">
    <property type="entry name" value="S20"/>
    <property type="match status" value="1"/>
</dbReference>
<dbReference type="PANTHER" id="PTHR33398">
    <property type="entry name" value="30S RIBOSOMAL PROTEIN S20"/>
    <property type="match status" value="1"/>
</dbReference>
<dbReference type="PANTHER" id="PTHR33398:SF1">
    <property type="entry name" value="SMALL RIBOSOMAL SUBUNIT PROTEIN BS20C"/>
    <property type="match status" value="1"/>
</dbReference>
<dbReference type="Pfam" id="PF01649">
    <property type="entry name" value="Ribosomal_S20p"/>
    <property type="match status" value="1"/>
</dbReference>
<dbReference type="SUPFAM" id="SSF46992">
    <property type="entry name" value="Ribosomal protein S20"/>
    <property type="match status" value="1"/>
</dbReference>